<feature type="chain" id="PRO_0000243686" description="Large ribosomal subunit protein bL20">
    <location>
        <begin position="1"/>
        <end position="118"/>
    </location>
</feature>
<protein>
    <recommendedName>
        <fullName evidence="1">Large ribosomal subunit protein bL20</fullName>
    </recommendedName>
    <alternativeName>
        <fullName evidence="2">50S ribosomal protein L20</fullName>
    </alternativeName>
</protein>
<sequence length="118" mass="13487">MARVKRGVTSHARHKKVLELAKGYRGRSSTNYRIALERVEKALRYAYRDRRNKKRDFRALWIQRINAAVREHGLTYSRFINGLDKAGIEIDRKVLAAIAFDDSAAFGEIVKKAQAALG</sequence>
<reference key="1">
    <citation type="journal article" date="2005" name="Nat. Biotechnol.">
        <title>Complete genome sequence of the acetic acid bacterium Gluconobacter oxydans.</title>
        <authorList>
            <person name="Prust C."/>
            <person name="Hoffmeister M."/>
            <person name="Liesegang H."/>
            <person name="Wiezer A."/>
            <person name="Fricke W.F."/>
            <person name="Ehrenreich A."/>
            <person name="Gottschalk G."/>
            <person name="Deppenmeier U."/>
        </authorList>
    </citation>
    <scope>NUCLEOTIDE SEQUENCE [LARGE SCALE GENOMIC DNA]</scope>
    <source>
        <strain>621H</strain>
    </source>
</reference>
<proteinExistence type="inferred from homology"/>
<accession>Q5FUA0</accession>
<organism>
    <name type="scientific">Gluconobacter oxydans (strain 621H)</name>
    <name type="common">Gluconobacter suboxydans</name>
    <dbReference type="NCBI Taxonomy" id="290633"/>
    <lineage>
        <taxon>Bacteria</taxon>
        <taxon>Pseudomonadati</taxon>
        <taxon>Pseudomonadota</taxon>
        <taxon>Alphaproteobacteria</taxon>
        <taxon>Acetobacterales</taxon>
        <taxon>Acetobacteraceae</taxon>
        <taxon>Gluconobacter</taxon>
    </lineage>
</organism>
<gene>
    <name evidence="1" type="primary">rplT</name>
    <name type="ordered locus">GOX0263</name>
</gene>
<keyword id="KW-1185">Reference proteome</keyword>
<keyword id="KW-0687">Ribonucleoprotein</keyword>
<keyword id="KW-0689">Ribosomal protein</keyword>
<keyword id="KW-0694">RNA-binding</keyword>
<keyword id="KW-0699">rRNA-binding</keyword>
<comment type="function">
    <text evidence="1">Binds directly to 23S ribosomal RNA and is necessary for the in vitro assembly process of the 50S ribosomal subunit. It is not involved in the protein synthesizing functions of that subunit.</text>
</comment>
<comment type="similarity">
    <text evidence="1">Belongs to the bacterial ribosomal protein bL20 family.</text>
</comment>
<name>RL20_GLUOX</name>
<evidence type="ECO:0000255" key="1">
    <source>
        <dbReference type="HAMAP-Rule" id="MF_00382"/>
    </source>
</evidence>
<evidence type="ECO:0000305" key="2"/>
<dbReference type="EMBL" id="CP000009">
    <property type="protein sequence ID" value="AAW60046.1"/>
    <property type="molecule type" value="Genomic_DNA"/>
</dbReference>
<dbReference type="RefSeq" id="WP_011251849.1">
    <property type="nucleotide sequence ID" value="NZ_LT900338.1"/>
</dbReference>
<dbReference type="SMR" id="Q5FUA0"/>
<dbReference type="STRING" id="290633.GOX0263"/>
<dbReference type="GeneID" id="56904530"/>
<dbReference type="KEGG" id="gox:GOX0263"/>
<dbReference type="eggNOG" id="COG0292">
    <property type="taxonomic scope" value="Bacteria"/>
</dbReference>
<dbReference type="HOGENOM" id="CLU_123265_0_1_5"/>
<dbReference type="Proteomes" id="UP000006375">
    <property type="component" value="Chromosome"/>
</dbReference>
<dbReference type="GO" id="GO:1990904">
    <property type="term" value="C:ribonucleoprotein complex"/>
    <property type="evidence" value="ECO:0007669"/>
    <property type="project" value="UniProtKB-KW"/>
</dbReference>
<dbReference type="GO" id="GO:0005840">
    <property type="term" value="C:ribosome"/>
    <property type="evidence" value="ECO:0007669"/>
    <property type="project" value="UniProtKB-KW"/>
</dbReference>
<dbReference type="GO" id="GO:0019843">
    <property type="term" value="F:rRNA binding"/>
    <property type="evidence" value="ECO:0007669"/>
    <property type="project" value="UniProtKB-UniRule"/>
</dbReference>
<dbReference type="GO" id="GO:0003735">
    <property type="term" value="F:structural constituent of ribosome"/>
    <property type="evidence" value="ECO:0007669"/>
    <property type="project" value="InterPro"/>
</dbReference>
<dbReference type="GO" id="GO:0000027">
    <property type="term" value="P:ribosomal large subunit assembly"/>
    <property type="evidence" value="ECO:0007669"/>
    <property type="project" value="UniProtKB-UniRule"/>
</dbReference>
<dbReference type="GO" id="GO:0006412">
    <property type="term" value="P:translation"/>
    <property type="evidence" value="ECO:0007669"/>
    <property type="project" value="InterPro"/>
</dbReference>
<dbReference type="CDD" id="cd07026">
    <property type="entry name" value="Ribosomal_L20"/>
    <property type="match status" value="1"/>
</dbReference>
<dbReference type="FunFam" id="1.10.1900.20:FF:000001">
    <property type="entry name" value="50S ribosomal protein L20"/>
    <property type="match status" value="1"/>
</dbReference>
<dbReference type="Gene3D" id="6.10.160.10">
    <property type="match status" value="1"/>
</dbReference>
<dbReference type="Gene3D" id="1.10.1900.20">
    <property type="entry name" value="Ribosomal protein L20"/>
    <property type="match status" value="1"/>
</dbReference>
<dbReference type="HAMAP" id="MF_00382">
    <property type="entry name" value="Ribosomal_bL20"/>
    <property type="match status" value="1"/>
</dbReference>
<dbReference type="InterPro" id="IPR005813">
    <property type="entry name" value="Ribosomal_bL20"/>
</dbReference>
<dbReference type="InterPro" id="IPR049946">
    <property type="entry name" value="RIBOSOMAL_L20_CS"/>
</dbReference>
<dbReference type="InterPro" id="IPR035566">
    <property type="entry name" value="Ribosomal_protein_bL20_C"/>
</dbReference>
<dbReference type="NCBIfam" id="TIGR01032">
    <property type="entry name" value="rplT_bact"/>
    <property type="match status" value="1"/>
</dbReference>
<dbReference type="PANTHER" id="PTHR10986">
    <property type="entry name" value="39S RIBOSOMAL PROTEIN L20"/>
    <property type="match status" value="1"/>
</dbReference>
<dbReference type="Pfam" id="PF00453">
    <property type="entry name" value="Ribosomal_L20"/>
    <property type="match status" value="1"/>
</dbReference>
<dbReference type="PRINTS" id="PR00062">
    <property type="entry name" value="RIBOSOMALL20"/>
</dbReference>
<dbReference type="SUPFAM" id="SSF74731">
    <property type="entry name" value="Ribosomal protein L20"/>
    <property type="match status" value="1"/>
</dbReference>
<dbReference type="PROSITE" id="PS00937">
    <property type="entry name" value="RIBOSOMAL_L20"/>
    <property type="match status" value="1"/>
</dbReference>